<comment type="function">
    <text evidence="1">Molecular chaperone. Has ATPase activity.</text>
</comment>
<comment type="subunit">
    <text evidence="1">Homodimer.</text>
</comment>
<comment type="subcellular location">
    <subcellularLocation>
        <location evidence="1">Cytoplasm</location>
    </subcellularLocation>
</comment>
<comment type="similarity">
    <text evidence="1">Belongs to the heat shock protein 90 family.</text>
</comment>
<name>HTPG_METCA</name>
<accession>Q60AK3</accession>
<keyword id="KW-0067">ATP-binding</keyword>
<keyword id="KW-0143">Chaperone</keyword>
<keyword id="KW-0963">Cytoplasm</keyword>
<keyword id="KW-0547">Nucleotide-binding</keyword>
<keyword id="KW-1185">Reference proteome</keyword>
<keyword id="KW-0346">Stress response</keyword>
<feature type="chain" id="PRO_0000224216" description="Chaperone protein HtpG">
    <location>
        <begin position="1"/>
        <end position="634"/>
    </location>
</feature>
<feature type="region of interest" description="A; substrate-binding" evidence="1">
    <location>
        <begin position="1"/>
        <end position="343"/>
    </location>
</feature>
<feature type="region of interest" description="B" evidence="1">
    <location>
        <begin position="344"/>
        <end position="560"/>
    </location>
</feature>
<feature type="region of interest" description="C" evidence="1">
    <location>
        <begin position="561"/>
        <end position="634"/>
    </location>
</feature>
<organism>
    <name type="scientific">Methylococcus capsulatus (strain ATCC 33009 / NCIMB 11132 / Bath)</name>
    <dbReference type="NCBI Taxonomy" id="243233"/>
    <lineage>
        <taxon>Bacteria</taxon>
        <taxon>Pseudomonadati</taxon>
        <taxon>Pseudomonadota</taxon>
        <taxon>Gammaproteobacteria</taxon>
        <taxon>Methylococcales</taxon>
        <taxon>Methylococcaceae</taxon>
        <taxon>Methylococcus</taxon>
    </lineage>
</organism>
<gene>
    <name evidence="1" type="primary">htpG</name>
    <name type="ordered locus">MCA0848</name>
</gene>
<proteinExistence type="inferred from homology"/>
<reference key="1">
    <citation type="journal article" date="2004" name="PLoS Biol.">
        <title>Genomic insights into methanotrophy: the complete genome sequence of Methylococcus capsulatus (Bath).</title>
        <authorList>
            <person name="Ward N.L."/>
            <person name="Larsen O."/>
            <person name="Sakwa J."/>
            <person name="Bruseth L."/>
            <person name="Khouri H.M."/>
            <person name="Durkin A.S."/>
            <person name="Dimitrov G."/>
            <person name="Jiang L."/>
            <person name="Scanlan D."/>
            <person name="Kang K.H."/>
            <person name="Lewis M.R."/>
            <person name="Nelson K.E."/>
            <person name="Methe B.A."/>
            <person name="Wu M."/>
            <person name="Heidelberg J.F."/>
            <person name="Paulsen I.T."/>
            <person name="Fouts D.E."/>
            <person name="Ravel J."/>
            <person name="Tettelin H."/>
            <person name="Ren Q."/>
            <person name="Read T.D."/>
            <person name="DeBoy R.T."/>
            <person name="Seshadri R."/>
            <person name="Salzberg S.L."/>
            <person name="Jensen H.B."/>
            <person name="Birkeland N.K."/>
            <person name="Nelson W.C."/>
            <person name="Dodson R.J."/>
            <person name="Grindhaug S.H."/>
            <person name="Holt I.E."/>
            <person name="Eidhammer I."/>
            <person name="Jonasen I."/>
            <person name="Vanaken S."/>
            <person name="Utterback T.R."/>
            <person name="Feldblyum T.V."/>
            <person name="Fraser C.M."/>
            <person name="Lillehaug J.R."/>
            <person name="Eisen J.A."/>
        </authorList>
    </citation>
    <scope>NUCLEOTIDE SEQUENCE [LARGE SCALE GENOMIC DNA]</scope>
    <source>
        <strain>ATCC 33009 / NCIMB 11132 / Bath</strain>
    </source>
</reference>
<sequence length="634" mass="71793">MTEAENRVTLGFEAEVKQLLHLMIHSLYGNKEIFLRELISNASDAADKLRFSALGNDALYEGDSRLRVRIEFDKAARTLSISDNGIGMTREEVQHNIGTIARSGTRHFFESLTGDEAKDSQLIGQFGVGFYSAFIVADKVVLETRKAGVPAEEGARWESSGEGSYTLETLTRPERGTRVTLHLREGEDEFLDGWKLRAIIRKFSDHISLPIEMKRETGEPKEGEEAPAEVWETVNSASALWAKNRDEITDEAYDEFYKHVSHDFQEPLARVHSRVEGTNEYTLLLYIPKHAPFDLWDRDSKRGVKLYVRKVFIMEDSDKLMPRYLRFVRGVIDSDSLPLNVSREILQENKQLEKIRGGAVKKVLGLLEDLANNEPEKYQAFWKEFGQVLKEGLIEDFANKDRLAKLLRFSSTHTDSEEQTVTLDEYVSRMKEGQDKIYFVSAESFGAARNSPHLEIFRKKDIEVLLLSDRIDEWLVSYLTEYEGKPLQSVARGDLDLGKLEGEEEKAEAAAEKEAFAPLTERLKKALEAKVNDVRLSHRLTDSPACLISESYGMSRTMERIMKSAGQNIPGSKPILEINPHHGLIARLNTEADQTRFQDLASLLLDQAVLAEGGQLDDPAEFVHKLNGLLQSLL</sequence>
<protein>
    <recommendedName>
        <fullName evidence="1">Chaperone protein HtpG</fullName>
    </recommendedName>
    <alternativeName>
        <fullName evidence="1">Heat shock protein HtpG</fullName>
    </alternativeName>
    <alternativeName>
        <fullName evidence="1">High temperature protein G</fullName>
    </alternativeName>
</protein>
<evidence type="ECO:0000255" key="1">
    <source>
        <dbReference type="HAMAP-Rule" id="MF_00505"/>
    </source>
</evidence>
<dbReference type="EMBL" id="AE017282">
    <property type="protein sequence ID" value="AAU93050.1"/>
    <property type="molecule type" value="Genomic_DNA"/>
</dbReference>
<dbReference type="RefSeq" id="WP_010960170.1">
    <property type="nucleotide sequence ID" value="NC_002977.6"/>
</dbReference>
<dbReference type="SMR" id="Q60AK3"/>
<dbReference type="STRING" id="243233.MCA0848"/>
<dbReference type="GeneID" id="88223157"/>
<dbReference type="KEGG" id="mca:MCA0848"/>
<dbReference type="eggNOG" id="COG0326">
    <property type="taxonomic scope" value="Bacteria"/>
</dbReference>
<dbReference type="HOGENOM" id="CLU_006684_3_0_6"/>
<dbReference type="Proteomes" id="UP000006821">
    <property type="component" value="Chromosome"/>
</dbReference>
<dbReference type="GO" id="GO:0005737">
    <property type="term" value="C:cytoplasm"/>
    <property type="evidence" value="ECO:0007669"/>
    <property type="project" value="UniProtKB-SubCell"/>
</dbReference>
<dbReference type="GO" id="GO:0005524">
    <property type="term" value="F:ATP binding"/>
    <property type="evidence" value="ECO:0007669"/>
    <property type="project" value="UniProtKB-UniRule"/>
</dbReference>
<dbReference type="GO" id="GO:0016887">
    <property type="term" value="F:ATP hydrolysis activity"/>
    <property type="evidence" value="ECO:0007669"/>
    <property type="project" value="InterPro"/>
</dbReference>
<dbReference type="GO" id="GO:0140662">
    <property type="term" value="F:ATP-dependent protein folding chaperone"/>
    <property type="evidence" value="ECO:0007669"/>
    <property type="project" value="InterPro"/>
</dbReference>
<dbReference type="GO" id="GO:0051082">
    <property type="term" value="F:unfolded protein binding"/>
    <property type="evidence" value="ECO:0007669"/>
    <property type="project" value="UniProtKB-UniRule"/>
</dbReference>
<dbReference type="CDD" id="cd16927">
    <property type="entry name" value="HATPase_Hsp90-like"/>
    <property type="match status" value="1"/>
</dbReference>
<dbReference type="FunFam" id="3.30.230.80:FF:000002">
    <property type="entry name" value="Molecular chaperone HtpG"/>
    <property type="match status" value="1"/>
</dbReference>
<dbReference type="FunFam" id="3.30.565.10:FF:000009">
    <property type="entry name" value="Molecular chaperone HtpG"/>
    <property type="match status" value="1"/>
</dbReference>
<dbReference type="Gene3D" id="3.30.230.80">
    <property type="match status" value="1"/>
</dbReference>
<dbReference type="Gene3D" id="3.40.50.11260">
    <property type="match status" value="1"/>
</dbReference>
<dbReference type="Gene3D" id="1.20.120.790">
    <property type="entry name" value="Heat shock protein 90, C-terminal domain"/>
    <property type="match status" value="1"/>
</dbReference>
<dbReference type="Gene3D" id="3.30.565.10">
    <property type="entry name" value="Histidine kinase-like ATPase, C-terminal domain"/>
    <property type="match status" value="1"/>
</dbReference>
<dbReference type="HAMAP" id="MF_00505">
    <property type="entry name" value="HSP90"/>
    <property type="match status" value="1"/>
</dbReference>
<dbReference type="InterPro" id="IPR036890">
    <property type="entry name" value="HATPase_C_sf"/>
</dbReference>
<dbReference type="InterPro" id="IPR019805">
    <property type="entry name" value="Heat_shock_protein_90_CS"/>
</dbReference>
<dbReference type="InterPro" id="IPR037196">
    <property type="entry name" value="HSP90_C"/>
</dbReference>
<dbReference type="InterPro" id="IPR001404">
    <property type="entry name" value="Hsp90_fam"/>
</dbReference>
<dbReference type="InterPro" id="IPR020575">
    <property type="entry name" value="Hsp90_N"/>
</dbReference>
<dbReference type="InterPro" id="IPR020568">
    <property type="entry name" value="Ribosomal_Su5_D2-typ_SF"/>
</dbReference>
<dbReference type="NCBIfam" id="NF003555">
    <property type="entry name" value="PRK05218.1"/>
    <property type="match status" value="1"/>
</dbReference>
<dbReference type="PANTHER" id="PTHR11528">
    <property type="entry name" value="HEAT SHOCK PROTEIN 90 FAMILY MEMBER"/>
    <property type="match status" value="1"/>
</dbReference>
<dbReference type="Pfam" id="PF13589">
    <property type="entry name" value="HATPase_c_3"/>
    <property type="match status" value="1"/>
</dbReference>
<dbReference type="Pfam" id="PF00183">
    <property type="entry name" value="HSP90"/>
    <property type="match status" value="1"/>
</dbReference>
<dbReference type="PIRSF" id="PIRSF002583">
    <property type="entry name" value="Hsp90"/>
    <property type="match status" value="1"/>
</dbReference>
<dbReference type="PRINTS" id="PR00775">
    <property type="entry name" value="HEATSHOCK90"/>
</dbReference>
<dbReference type="SMART" id="SM00387">
    <property type="entry name" value="HATPase_c"/>
    <property type="match status" value="1"/>
</dbReference>
<dbReference type="SUPFAM" id="SSF55874">
    <property type="entry name" value="ATPase domain of HSP90 chaperone/DNA topoisomerase II/histidine kinase"/>
    <property type="match status" value="1"/>
</dbReference>
<dbReference type="SUPFAM" id="SSF110942">
    <property type="entry name" value="HSP90 C-terminal domain"/>
    <property type="match status" value="1"/>
</dbReference>
<dbReference type="SUPFAM" id="SSF54211">
    <property type="entry name" value="Ribosomal protein S5 domain 2-like"/>
    <property type="match status" value="1"/>
</dbReference>
<dbReference type="PROSITE" id="PS00298">
    <property type="entry name" value="HSP90"/>
    <property type="match status" value="1"/>
</dbReference>